<keyword id="KW-1003">Cell membrane</keyword>
<keyword id="KW-0168">Coated pit</keyword>
<keyword id="KW-0254">Endocytosis</keyword>
<keyword id="KW-0472">Membrane</keyword>
<keyword id="KW-0597">Phosphoprotein</keyword>
<keyword id="KW-0653">Protein transport</keyword>
<keyword id="KW-1185">Reference proteome</keyword>
<keyword id="KW-0813">Transport</keyword>
<evidence type="ECO:0000250" key="1"/>
<evidence type="ECO:0000255" key="2">
    <source>
        <dbReference type="PROSITE-ProRule" id="PRU00404"/>
    </source>
</evidence>
<evidence type="ECO:0000269" key="3">
    <source>
    </source>
</evidence>
<evidence type="ECO:0000305" key="4"/>
<proteinExistence type="evidence at protein level"/>
<sequence length="446" mass="50821">MISGLFIFNLKGDTLICKTFRHDLKKSVTEIFRVAILTNTDYRHPIVSIGSSTYIYTKHEDLYVVAITKGNPNVMIVLEFLESLIQDLTHYFGKLNENTVKDNVSFIFELLDEMIDYGIIQTTEPDALARSVSITAVKKKGNALSLKRSHSSQLAHTTSSEIPGSVPWRRAGIKYRKNSIYIDIVERMNLLISSTGNVLRSDVSGVVKMRAMLSGMPECQFGLNDKLDFKLKQSESKSKSNNSRNPSSVNGGFVILEDCQFHQCVRLPEFENEHRITFIPPDGEVELMSYRSHENINIPFRIVPIVEQLSKQKIIYRISIRADYPHKLSSSLNFRIPVPTNVVKANPRVNRGKAGYEPSENIINWKIPRFLGETELIFYAEVELSNTTNQQIWAKPPISLDFNILMFTSSGLHVQYLRVSEPSNSKYKSIKWVRYSTRAGTCEIRI</sequence>
<protein>
    <recommendedName>
        <fullName>AP-2 complex subunit mu</fullName>
    </recommendedName>
    <alternativeName>
        <fullName>Clathrin assembly protein complex 2 mu medium chain</fullName>
    </alternativeName>
    <alternativeName>
        <fullName>Clathrin coat-associated protein AP50</fullName>
    </alternativeName>
    <alternativeName>
        <fullName>Mu2-adaptin</fullName>
    </alternativeName>
    <alternativeName>
        <fullName>Plasma membrane adaptor AP-2 50 kDa protein</fullName>
    </alternativeName>
    <alternativeName>
        <fullName>Probable clathrin coat assembly protein AP50</fullName>
    </alternativeName>
</protein>
<gene>
    <name type="primary">apm4</name>
    <name type="ORF">SPAC31A2.09c</name>
</gene>
<reference key="1">
    <citation type="journal article" date="2002" name="Nature">
        <title>The genome sequence of Schizosaccharomyces pombe.</title>
        <authorList>
            <person name="Wood V."/>
            <person name="Gwilliam R."/>
            <person name="Rajandream M.A."/>
            <person name="Lyne M.H."/>
            <person name="Lyne R."/>
            <person name="Stewart A."/>
            <person name="Sgouros J.G."/>
            <person name="Peat N."/>
            <person name="Hayles J."/>
            <person name="Baker S.G."/>
            <person name="Basham D."/>
            <person name="Bowman S."/>
            <person name="Brooks K."/>
            <person name="Brown D."/>
            <person name="Brown S."/>
            <person name="Chillingworth T."/>
            <person name="Churcher C.M."/>
            <person name="Collins M."/>
            <person name="Connor R."/>
            <person name="Cronin A."/>
            <person name="Davis P."/>
            <person name="Feltwell T."/>
            <person name="Fraser A."/>
            <person name="Gentles S."/>
            <person name="Goble A."/>
            <person name="Hamlin N."/>
            <person name="Harris D.E."/>
            <person name="Hidalgo J."/>
            <person name="Hodgson G."/>
            <person name="Holroyd S."/>
            <person name="Hornsby T."/>
            <person name="Howarth S."/>
            <person name="Huckle E.J."/>
            <person name="Hunt S."/>
            <person name="Jagels K."/>
            <person name="James K.D."/>
            <person name="Jones L."/>
            <person name="Jones M."/>
            <person name="Leather S."/>
            <person name="McDonald S."/>
            <person name="McLean J."/>
            <person name="Mooney P."/>
            <person name="Moule S."/>
            <person name="Mungall K.L."/>
            <person name="Murphy L.D."/>
            <person name="Niblett D."/>
            <person name="Odell C."/>
            <person name="Oliver K."/>
            <person name="O'Neil S."/>
            <person name="Pearson D."/>
            <person name="Quail M.A."/>
            <person name="Rabbinowitsch E."/>
            <person name="Rutherford K.M."/>
            <person name="Rutter S."/>
            <person name="Saunders D."/>
            <person name="Seeger K."/>
            <person name="Sharp S."/>
            <person name="Skelton J."/>
            <person name="Simmonds M.N."/>
            <person name="Squares R."/>
            <person name="Squares S."/>
            <person name="Stevens K."/>
            <person name="Taylor K."/>
            <person name="Taylor R.G."/>
            <person name="Tivey A."/>
            <person name="Walsh S.V."/>
            <person name="Warren T."/>
            <person name="Whitehead S."/>
            <person name="Woodward J.R."/>
            <person name="Volckaert G."/>
            <person name="Aert R."/>
            <person name="Robben J."/>
            <person name="Grymonprez B."/>
            <person name="Weltjens I."/>
            <person name="Vanstreels E."/>
            <person name="Rieger M."/>
            <person name="Schaefer M."/>
            <person name="Mueller-Auer S."/>
            <person name="Gabel C."/>
            <person name="Fuchs M."/>
            <person name="Duesterhoeft A."/>
            <person name="Fritzc C."/>
            <person name="Holzer E."/>
            <person name="Moestl D."/>
            <person name="Hilbert H."/>
            <person name="Borzym K."/>
            <person name="Langer I."/>
            <person name="Beck A."/>
            <person name="Lehrach H."/>
            <person name="Reinhardt R."/>
            <person name="Pohl T.M."/>
            <person name="Eger P."/>
            <person name="Zimmermann W."/>
            <person name="Wedler H."/>
            <person name="Wambutt R."/>
            <person name="Purnelle B."/>
            <person name="Goffeau A."/>
            <person name="Cadieu E."/>
            <person name="Dreano S."/>
            <person name="Gloux S."/>
            <person name="Lelaure V."/>
            <person name="Mottier S."/>
            <person name="Galibert F."/>
            <person name="Aves S.J."/>
            <person name="Xiang Z."/>
            <person name="Hunt C."/>
            <person name="Moore K."/>
            <person name="Hurst S.M."/>
            <person name="Lucas M."/>
            <person name="Rochet M."/>
            <person name="Gaillardin C."/>
            <person name="Tallada V.A."/>
            <person name="Garzon A."/>
            <person name="Thode G."/>
            <person name="Daga R.R."/>
            <person name="Cruzado L."/>
            <person name="Jimenez J."/>
            <person name="Sanchez M."/>
            <person name="del Rey F."/>
            <person name="Benito J."/>
            <person name="Dominguez A."/>
            <person name="Revuelta J.L."/>
            <person name="Moreno S."/>
            <person name="Armstrong J."/>
            <person name="Forsburg S.L."/>
            <person name="Cerutti L."/>
            <person name="Lowe T."/>
            <person name="McCombie W.R."/>
            <person name="Paulsen I."/>
            <person name="Potashkin J."/>
            <person name="Shpakovski G.V."/>
            <person name="Ussery D."/>
            <person name="Barrell B.G."/>
            <person name="Nurse P."/>
        </authorList>
    </citation>
    <scope>NUCLEOTIDE SEQUENCE [LARGE SCALE GENOMIC DNA]</scope>
    <source>
        <strain>972 / ATCC 24843</strain>
    </source>
</reference>
<reference key="2">
    <citation type="journal article" date="2008" name="J. Proteome Res.">
        <title>Phosphoproteome analysis of fission yeast.</title>
        <authorList>
            <person name="Wilson-Grady J.T."/>
            <person name="Villen J."/>
            <person name="Gygi S.P."/>
        </authorList>
    </citation>
    <scope>PHOSPHORYLATION [LARGE SCALE ANALYSIS] AT SER-145; SER-151; SER-152 AND THR-157</scope>
    <scope>IDENTIFICATION BY MASS SPECTROMETRY</scope>
</reference>
<accession>Q09718</accession>
<name>AP2M_SCHPO</name>
<dbReference type="EMBL" id="CU329670">
    <property type="protein sequence ID" value="CAA90467.1"/>
    <property type="molecule type" value="Genomic_DNA"/>
</dbReference>
<dbReference type="PIR" id="S59646">
    <property type="entry name" value="S59646"/>
</dbReference>
<dbReference type="RefSeq" id="NP_592921.1">
    <property type="nucleotide sequence ID" value="NM_001018322.2"/>
</dbReference>
<dbReference type="SMR" id="Q09718"/>
<dbReference type="BioGRID" id="278027">
    <property type="interactions" value="41"/>
</dbReference>
<dbReference type="FunCoup" id="Q09718">
    <property type="interactions" value="321"/>
</dbReference>
<dbReference type="STRING" id="284812.Q09718"/>
<dbReference type="iPTMnet" id="Q09718"/>
<dbReference type="PaxDb" id="4896-SPAC31A2.09c.1"/>
<dbReference type="EnsemblFungi" id="SPAC31A2.09c.1">
    <property type="protein sequence ID" value="SPAC31A2.09c.1:pep"/>
    <property type="gene ID" value="SPAC31A2.09c"/>
</dbReference>
<dbReference type="GeneID" id="2541527"/>
<dbReference type="KEGG" id="spo:2541527"/>
<dbReference type="PomBase" id="SPAC31A2.09c">
    <property type="gene designation" value="apm4"/>
</dbReference>
<dbReference type="VEuPathDB" id="FungiDB:SPAC31A2.09c"/>
<dbReference type="eggNOG" id="KOG0938">
    <property type="taxonomic scope" value="Eukaryota"/>
</dbReference>
<dbReference type="HOGENOM" id="CLU_026996_5_2_1"/>
<dbReference type="InParanoid" id="Q09718"/>
<dbReference type="OMA" id="VWKIPRI"/>
<dbReference type="PhylomeDB" id="Q09718"/>
<dbReference type="Reactome" id="R-SPO-437239">
    <property type="pathway name" value="Recycling pathway of L1"/>
</dbReference>
<dbReference type="Reactome" id="R-SPO-8856825">
    <property type="pathway name" value="Cargo recognition for clathrin-mediated endocytosis"/>
</dbReference>
<dbReference type="Reactome" id="R-SPO-8856828">
    <property type="pathway name" value="Clathrin-mediated endocytosis"/>
</dbReference>
<dbReference type="Reactome" id="R-SPO-8866427">
    <property type="pathway name" value="VLDLR internalisation and degradation"/>
</dbReference>
<dbReference type="Reactome" id="R-SPO-8964038">
    <property type="pathway name" value="LDL clearance"/>
</dbReference>
<dbReference type="PRO" id="PR:Q09718"/>
<dbReference type="Proteomes" id="UP000002485">
    <property type="component" value="Chromosome I"/>
</dbReference>
<dbReference type="GO" id="GO:0030122">
    <property type="term" value="C:AP-2 adaptor complex"/>
    <property type="evidence" value="ECO:0000318"/>
    <property type="project" value="GO_Central"/>
</dbReference>
<dbReference type="GO" id="GO:0051285">
    <property type="term" value="C:cell cortex of cell tip"/>
    <property type="evidence" value="ECO:0000314"/>
    <property type="project" value="PomBase"/>
</dbReference>
<dbReference type="GO" id="GO:0032153">
    <property type="term" value="C:cell division site"/>
    <property type="evidence" value="ECO:0000314"/>
    <property type="project" value="PomBase"/>
</dbReference>
<dbReference type="GO" id="GO:0031410">
    <property type="term" value="C:cytoplasmic vesicle"/>
    <property type="evidence" value="ECO:0000318"/>
    <property type="project" value="GO_Central"/>
</dbReference>
<dbReference type="GO" id="GO:0005829">
    <property type="term" value="C:cytosol"/>
    <property type="evidence" value="ECO:0007005"/>
    <property type="project" value="PomBase"/>
</dbReference>
<dbReference type="GO" id="GO:0072686">
    <property type="term" value="C:mitotic spindle"/>
    <property type="evidence" value="ECO:0007005"/>
    <property type="project" value="PomBase"/>
</dbReference>
<dbReference type="GO" id="GO:0044732">
    <property type="term" value="C:mitotic spindle pole body"/>
    <property type="evidence" value="ECO:0007005"/>
    <property type="project" value="PomBase"/>
</dbReference>
<dbReference type="GO" id="GO:0005634">
    <property type="term" value="C:nucleus"/>
    <property type="evidence" value="ECO:0007005"/>
    <property type="project" value="PomBase"/>
</dbReference>
<dbReference type="GO" id="GO:0035615">
    <property type="term" value="F:clathrin adaptor activity"/>
    <property type="evidence" value="ECO:0000318"/>
    <property type="project" value="GO_Central"/>
</dbReference>
<dbReference type="GO" id="GO:0072583">
    <property type="term" value="P:clathrin-dependent endocytosis"/>
    <property type="evidence" value="ECO:0000318"/>
    <property type="project" value="GO_Central"/>
</dbReference>
<dbReference type="GO" id="GO:0006886">
    <property type="term" value="P:intracellular protein transport"/>
    <property type="evidence" value="ECO:0000266"/>
    <property type="project" value="PomBase"/>
</dbReference>
<dbReference type="CDD" id="cd09251">
    <property type="entry name" value="AP-2_Mu2_Cterm"/>
    <property type="match status" value="1"/>
</dbReference>
<dbReference type="CDD" id="cd14836">
    <property type="entry name" value="AP2_Mu_N"/>
    <property type="match status" value="1"/>
</dbReference>
<dbReference type="FunFam" id="3.30.450.60:FF:000002">
    <property type="entry name" value="AP-2 complex subunit mu, putative"/>
    <property type="match status" value="1"/>
</dbReference>
<dbReference type="Gene3D" id="3.30.450.60">
    <property type="match status" value="1"/>
</dbReference>
<dbReference type="Gene3D" id="2.60.40.1170">
    <property type="entry name" value="Mu homology domain, subdomain B"/>
    <property type="match status" value="2"/>
</dbReference>
<dbReference type="InterPro" id="IPR050431">
    <property type="entry name" value="Adaptor_comp_med_subunit"/>
</dbReference>
<dbReference type="InterPro" id="IPR036168">
    <property type="entry name" value="AP2_Mu_C_sf"/>
</dbReference>
<dbReference type="InterPro" id="IPR043532">
    <property type="entry name" value="AP2_Mu_N"/>
</dbReference>
<dbReference type="InterPro" id="IPR022775">
    <property type="entry name" value="AP_mu_sigma_su"/>
</dbReference>
<dbReference type="InterPro" id="IPR001392">
    <property type="entry name" value="Clathrin_mu"/>
</dbReference>
<dbReference type="InterPro" id="IPR018240">
    <property type="entry name" value="Clathrin_mu_CS"/>
</dbReference>
<dbReference type="InterPro" id="IPR011012">
    <property type="entry name" value="Longin-like_dom_sf"/>
</dbReference>
<dbReference type="InterPro" id="IPR028565">
    <property type="entry name" value="MHD"/>
</dbReference>
<dbReference type="InterPro" id="IPR043512">
    <property type="entry name" value="Mu2_C"/>
</dbReference>
<dbReference type="PANTHER" id="PTHR10529">
    <property type="entry name" value="AP COMPLEX SUBUNIT MU"/>
    <property type="match status" value="1"/>
</dbReference>
<dbReference type="Pfam" id="PF00928">
    <property type="entry name" value="Adap_comp_sub"/>
    <property type="match status" value="1"/>
</dbReference>
<dbReference type="Pfam" id="PF01217">
    <property type="entry name" value="Clat_adaptor_s"/>
    <property type="match status" value="1"/>
</dbReference>
<dbReference type="PIRSF" id="PIRSF005992">
    <property type="entry name" value="Clathrin_mu"/>
    <property type="match status" value="1"/>
</dbReference>
<dbReference type="PRINTS" id="PR00314">
    <property type="entry name" value="CLATHRINADPT"/>
</dbReference>
<dbReference type="SUPFAM" id="SSF49447">
    <property type="entry name" value="Second domain of Mu2 adaptin subunit (ap50) of ap2 adaptor"/>
    <property type="match status" value="1"/>
</dbReference>
<dbReference type="SUPFAM" id="SSF64356">
    <property type="entry name" value="SNARE-like"/>
    <property type="match status" value="1"/>
</dbReference>
<dbReference type="PROSITE" id="PS00990">
    <property type="entry name" value="CLAT_ADAPTOR_M_1"/>
    <property type="match status" value="1"/>
</dbReference>
<dbReference type="PROSITE" id="PS00991">
    <property type="entry name" value="CLAT_ADAPTOR_M_2"/>
    <property type="match status" value="1"/>
</dbReference>
<dbReference type="PROSITE" id="PS51072">
    <property type="entry name" value="MHD"/>
    <property type="match status" value="1"/>
</dbReference>
<comment type="function">
    <text evidence="4">Component of the adaptor complexes which link clathrin to receptors in coated vesicles. Clathrin-associated protein complexes are believed to interact with the cytoplasmic tails of membrane proteins, leading to their selection and concentration. AP50 is a subunit of the plasma membrane adaptor (Potential).</text>
</comment>
<comment type="subunit">
    <text evidence="1">Adaptor protein complex 2 (AP-2) is a heterotetramer composed of two large adaptins (alpha-type subunit apl3 and beta-type subunit apl1), a medium chain (mu-type subunit apm4) and a small adaptin (sigma-type subunit aps2).</text>
</comment>
<comment type="subcellular location">
    <subcellularLocation>
        <location evidence="1">Cell membrane</location>
    </subcellularLocation>
    <subcellularLocation>
        <location evidence="1">Membrane</location>
        <location evidence="1">Coated pit</location>
        <topology evidence="1">Peripheral membrane protein</topology>
        <orientation evidence="1">Cytoplasmic side</orientation>
    </subcellularLocation>
    <text evidence="1">Component of the coat surrounding the cytoplasmic face of coated vesicles in the plasma membrane.</text>
</comment>
<comment type="similarity">
    <text evidence="4">Belongs to the adaptor complexes medium subunit family.</text>
</comment>
<organism>
    <name type="scientific">Schizosaccharomyces pombe (strain 972 / ATCC 24843)</name>
    <name type="common">Fission yeast</name>
    <dbReference type="NCBI Taxonomy" id="284812"/>
    <lineage>
        <taxon>Eukaryota</taxon>
        <taxon>Fungi</taxon>
        <taxon>Dikarya</taxon>
        <taxon>Ascomycota</taxon>
        <taxon>Taphrinomycotina</taxon>
        <taxon>Schizosaccharomycetes</taxon>
        <taxon>Schizosaccharomycetales</taxon>
        <taxon>Schizosaccharomycetaceae</taxon>
        <taxon>Schizosaccharomyces</taxon>
    </lineage>
</organism>
<feature type="chain" id="PRO_0000193779" description="AP-2 complex subunit mu">
    <location>
        <begin position="1"/>
        <end position="446"/>
    </location>
</feature>
<feature type="domain" description="MHD" evidence="2">
    <location>
        <begin position="177"/>
        <end position="445"/>
    </location>
</feature>
<feature type="modified residue" description="Phosphoserine" evidence="3">
    <location>
        <position position="145"/>
    </location>
</feature>
<feature type="modified residue" description="Phosphoserine" evidence="3">
    <location>
        <position position="151"/>
    </location>
</feature>
<feature type="modified residue" description="Phosphoserine" evidence="3">
    <location>
        <position position="152"/>
    </location>
</feature>
<feature type="modified residue" description="Phosphothreonine" evidence="3">
    <location>
        <position position="157"/>
    </location>
</feature>